<accession>B5YWX8</accession>
<name>RL25_ECO5E</name>
<organism>
    <name type="scientific">Escherichia coli O157:H7 (strain EC4115 / EHEC)</name>
    <dbReference type="NCBI Taxonomy" id="444450"/>
    <lineage>
        <taxon>Bacteria</taxon>
        <taxon>Pseudomonadati</taxon>
        <taxon>Pseudomonadota</taxon>
        <taxon>Gammaproteobacteria</taxon>
        <taxon>Enterobacterales</taxon>
        <taxon>Enterobacteriaceae</taxon>
        <taxon>Escherichia</taxon>
    </lineage>
</organism>
<reference key="1">
    <citation type="journal article" date="2011" name="Proc. Natl. Acad. Sci. U.S.A.">
        <title>Genomic anatomy of Escherichia coli O157:H7 outbreaks.</title>
        <authorList>
            <person name="Eppinger M."/>
            <person name="Mammel M.K."/>
            <person name="Leclerc J.E."/>
            <person name="Ravel J."/>
            <person name="Cebula T.A."/>
        </authorList>
    </citation>
    <scope>NUCLEOTIDE SEQUENCE [LARGE SCALE GENOMIC DNA]</scope>
    <source>
        <strain>EC4115 / EHEC</strain>
    </source>
</reference>
<proteinExistence type="inferred from homology"/>
<feature type="chain" id="PRO_1000142577" description="Large ribosomal subunit protein bL25">
    <location>
        <begin position="1"/>
        <end position="94"/>
    </location>
</feature>
<sequence>MFTINAEVRKEQGKGASRRLRAANKFPAIIYGGKEAPLAIELDHDKVMNIQAKAEFYSEVLTIVVDGKEIKVKAQDVQRHPYKPKLQHIDFVRA</sequence>
<comment type="function">
    <text evidence="1">This is one of the proteins that binds to the 5S RNA in the ribosome where it forms part of the central protuberance.</text>
</comment>
<comment type="subunit">
    <text evidence="1">Part of the 50S ribosomal subunit; part of the 5S rRNA/L5/L18/L25 subcomplex. Contacts the 5S rRNA. Binds to the 5S rRNA independently of L5 and L18.</text>
</comment>
<comment type="similarity">
    <text evidence="1">Belongs to the bacterial ribosomal protein bL25 family.</text>
</comment>
<keyword id="KW-0687">Ribonucleoprotein</keyword>
<keyword id="KW-0689">Ribosomal protein</keyword>
<keyword id="KW-0694">RNA-binding</keyword>
<keyword id="KW-0699">rRNA-binding</keyword>
<dbReference type="EMBL" id="CP001164">
    <property type="protein sequence ID" value="ACI37585.1"/>
    <property type="molecule type" value="Genomic_DNA"/>
</dbReference>
<dbReference type="RefSeq" id="WP_000494181.1">
    <property type="nucleotide sequence ID" value="NC_011353.1"/>
</dbReference>
<dbReference type="SMR" id="B5YWX8"/>
<dbReference type="KEGG" id="ecf:ECH74115_3323"/>
<dbReference type="HOGENOM" id="CLU_137946_0_0_6"/>
<dbReference type="GO" id="GO:0022625">
    <property type="term" value="C:cytosolic large ribosomal subunit"/>
    <property type="evidence" value="ECO:0007669"/>
    <property type="project" value="TreeGrafter"/>
</dbReference>
<dbReference type="GO" id="GO:0008097">
    <property type="term" value="F:5S rRNA binding"/>
    <property type="evidence" value="ECO:0007669"/>
    <property type="project" value="InterPro"/>
</dbReference>
<dbReference type="GO" id="GO:0003735">
    <property type="term" value="F:structural constituent of ribosome"/>
    <property type="evidence" value="ECO:0007669"/>
    <property type="project" value="InterPro"/>
</dbReference>
<dbReference type="GO" id="GO:0006412">
    <property type="term" value="P:translation"/>
    <property type="evidence" value="ECO:0007669"/>
    <property type="project" value="UniProtKB-UniRule"/>
</dbReference>
<dbReference type="CDD" id="cd00495">
    <property type="entry name" value="Ribosomal_L25_TL5_CTC"/>
    <property type="match status" value="1"/>
</dbReference>
<dbReference type="FunFam" id="2.40.240.10:FF:000002">
    <property type="entry name" value="50S ribosomal protein L25"/>
    <property type="match status" value="1"/>
</dbReference>
<dbReference type="Gene3D" id="2.40.240.10">
    <property type="entry name" value="Ribosomal Protein L25, Chain P"/>
    <property type="match status" value="1"/>
</dbReference>
<dbReference type="HAMAP" id="MF_01336">
    <property type="entry name" value="Ribosomal_bL25"/>
    <property type="match status" value="1"/>
</dbReference>
<dbReference type="InterPro" id="IPR020056">
    <property type="entry name" value="Rbsml_bL25/Gln-tRNA_synth_N"/>
</dbReference>
<dbReference type="InterPro" id="IPR011035">
    <property type="entry name" value="Ribosomal_bL25/Gln-tRNA_synth"/>
</dbReference>
<dbReference type="InterPro" id="IPR020055">
    <property type="entry name" value="Ribosomal_bL25_short"/>
</dbReference>
<dbReference type="InterPro" id="IPR029751">
    <property type="entry name" value="Ribosomal_L25_dom"/>
</dbReference>
<dbReference type="InterPro" id="IPR020930">
    <property type="entry name" value="Ribosomal_uL5_bac-type"/>
</dbReference>
<dbReference type="NCBIfam" id="NF004612">
    <property type="entry name" value="PRK05943.1"/>
    <property type="match status" value="1"/>
</dbReference>
<dbReference type="PANTHER" id="PTHR33284">
    <property type="entry name" value="RIBOSOMAL PROTEIN L25/GLN-TRNA SYNTHETASE, ANTI-CODON-BINDING DOMAIN-CONTAINING PROTEIN"/>
    <property type="match status" value="1"/>
</dbReference>
<dbReference type="PANTHER" id="PTHR33284:SF1">
    <property type="entry name" value="RIBOSOMAL PROTEIN L25_GLN-TRNA SYNTHETASE, ANTI-CODON-BINDING DOMAIN-CONTAINING PROTEIN"/>
    <property type="match status" value="1"/>
</dbReference>
<dbReference type="Pfam" id="PF01386">
    <property type="entry name" value="Ribosomal_L25p"/>
    <property type="match status" value="1"/>
</dbReference>
<dbReference type="SUPFAM" id="SSF50715">
    <property type="entry name" value="Ribosomal protein L25-like"/>
    <property type="match status" value="1"/>
</dbReference>
<evidence type="ECO:0000255" key="1">
    <source>
        <dbReference type="HAMAP-Rule" id="MF_01336"/>
    </source>
</evidence>
<evidence type="ECO:0000305" key="2"/>
<gene>
    <name evidence="1" type="primary">rplY</name>
    <name type="ordered locus">ECH74115_3323</name>
</gene>
<protein>
    <recommendedName>
        <fullName evidence="1">Large ribosomal subunit protein bL25</fullName>
    </recommendedName>
    <alternativeName>
        <fullName evidence="2">50S ribosomal protein L25</fullName>
    </alternativeName>
</protein>